<reference key="1">
    <citation type="journal article" date="2013" name="Plant Physiol.">
        <title>A Nostoc punctiforme Sugar Transporter Necessary to Establish a Cyanobacterium-Plant Symbiosis.</title>
        <authorList>
            <person name="Ekman M."/>
            <person name="Picossi S."/>
            <person name="Campbell E.L."/>
            <person name="Meeks J.C."/>
            <person name="Flores E."/>
        </authorList>
    </citation>
    <scope>NUCLEOTIDE SEQUENCE [LARGE SCALE GENOMIC DNA]</scope>
    <source>
        <strain>ATCC 29133 / PCC 73102</strain>
    </source>
</reference>
<name>Y3866_NOSP7</name>
<feature type="chain" id="PRO_1000146089" description="Putative regulatory protein Npun_R3866">
    <location>
        <begin position="1"/>
        <end position="88"/>
    </location>
</feature>
<comment type="similarity">
    <text evidence="1">Belongs to the RemA family.</text>
</comment>
<proteinExistence type="inferred from homology"/>
<protein>
    <recommendedName>
        <fullName evidence="1">Putative regulatory protein Npun_R3866</fullName>
    </recommendedName>
</protein>
<accession>B2J593</accession>
<organism>
    <name type="scientific">Nostoc punctiforme (strain ATCC 29133 / PCC 73102)</name>
    <dbReference type="NCBI Taxonomy" id="63737"/>
    <lineage>
        <taxon>Bacteria</taxon>
        <taxon>Bacillati</taxon>
        <taxon>Cyanobacteriota</taxon>
        <taxon>Cyanophyceae</taxon>
        <taxon>Nostocales</taxon>
        <taxon>Nostocaceae</taxon>
        <taxon>Nostoc</taxon>
    </lineage>
</organism>
<gene>
    <name type="ordered locus">Npun_R3866</name>
</gene>
<evidence type="ECO:0000255" key="1">
    <source>
        <dbReference type="HAMAP-Rule" id="MF_01503"/>
    </source>
</evidence>
<dbReference type="EMBL" id="CP001037">
    <property type="protein sequence ID" value="ACC82250.1"/>
    <property type="molecule type" value="Genomic_DNA"/>
</dbReference>
<dbReference type="SMR" id="B2J593"/>
<dbReference type="STRING" id="63737.Npun_R3866"/>
<dbReference type="EnsemblBacteria" id="ACC82250">
    <property type="protein sequence ID" value="ACC82250"/>
    <property type="gene ID" value="Npun_R3866"/>
</dbReference>
<dbReference type="KEGG" id="npu:Npun_R3866"/>
<dbReference type="eggNOG" id="COG2052">
    <property type="taxonomic scope" value="Bacteria"/>
</dbReference>
<dbReference type="HOGENOM" id="CLU_165326_0_0_3"/>
<dbReference type="OrthoDB" id="5432174at2"/>
<dbReference type="PhylomeDB" id="B2J593"/>
<dbReference type="Proteomes" id="UP000001191">
    <property type="component" value="Chromosome"/>
</dbReference>
<dbReference type="HAMAP" id="MF_01503">
    <property type="entry name" value="RemA"/>
    <property type="match status" value="1"/>
</dbReference>
<dbReference type="InterPro" id="IPR007169">
    <property type="entry name" value="RemA-like"/>
</dbReference>
<dbReference type="NCBIfam" id="NF046064">
    <property type="entry name" value="MtxBflmRegRemA"/>
    <property type="match status" value="1"/>
</dbReference>
<dbReference type="NCBIfam" id="NF003315">
    <property type="entry name" value="PRK04323.1"/>
    <property type="match status" value="1"/>
</dbReference>
<dbReference type="PANTHER" id="PTHR38449:SF1">
    <property type="entry name" value="REGULATORY PROTEIN SSL2874-RELATED"/>
    <property type="match status" value="1"/>
</dbReference>
<dbReference type="PANTHER" id="PTHR38449">
    <property type="entry name" value="REGULATORY PROTEIN TM_1690-RELATED"/>
    <property type="match status" value="1"/>
</dbReference>
<dbReference type="Pfam" id="PF04025">
    <property type="entry name" value="RemA-like"/>
    <property type="match status" value="1"/>
</dbReference>
<keyword id="KW-1185">Reference proteome</keyword>
<sequence length="88" mass="9696">MEIQLINIGFGNIVSANRVVAIVSPESAPIKRIITDARDRGQLIDATYGRRTRAVIITDSSHVILSAIQPETVANRFVISRDHQTVDN</sequence>